<organism>
    <name type="scientific">Streptococcus suis (strain 98HAH33)</name>
    <dbReference type="NCBI Taxonomy" id="391296"/>
    <lineage>
        <taxon>Bacteria</taxon>
        <taxon>Bacillati</taxon>
        <taxon>Bacillota</taxon>
        <taxon>Bacilli</taxon>
        <taxon>Lactobacillales</taxon>
        <taxon>Streptococcaceae</taxon>
        <taxon>Streptococcus</taxon>
    </lineage>
</organism>
<comment type="function">
    <text evidence="1">Binds directly to 23S ribosomal RNA and is necessary for the in vitro assembly process of the 50S ribosomal subunit. It is not involved in the protein synthesizing functions of that subunit.</text>
</comment>
<comment type="similarity">
    <text evidence="1">Belongs to the bacterial ribosomal protein bL20 family.</text>
</comment>
<sequence length="119" mass="13679">MARVKGGVVSRKRRKRILKLAKGYYGAKHLLFRTAKEQVMNSYYYAYRDRRQKKRDFRKLWITRINAAARMNGLSYSQLMHGLKLAEIEVNRKMLADLAVNDAAAFTALADAAKAKLAK</sequence>
<accession>A4W251</accession>
<evidence type="ECO:0000255" key="1">
    <source>
        <dbReference type="HAMAP-Rule" id="MF_00382"/>
    </source>
</evidence>
<evidence type="ECO:0000305" key="2"/>
<protein>
    <recommendedName>
        <fullName evidence="1">Large ribosomal subunit protein bL20</fullName>
    </recommendedName>
    <alternativeName>
        <fullName evidence="2">50S ribosomal protein L20</fullName>
    </alternativeName>
</protein>
<dbReference type="EMBL" id="CP000408">
    <property type="protein sequence ID" value="ABP92440.1"/>
    <property type="molecule type" value="Genomic_DNA"/>
</dbReference>
<dbReference type="SMR" id="A4W251"/>
<dbReference type="KEGG" id="ssv:SSU98_1282"/>
<dbReference type="HOGENOM" id="CLU_123265_0_1_9"/>
<dbReference type="GO" id="GO:1990904">
    <property type="term" value="C:ribonucleoprotein complex"/>
    <property type="evidence" value="ECO:0007669"/>
    <property type="project" value="UniProtKB-KW"/>
</dbReference>
<dbReference type="GO" id="GO:0005840">
    <property type="term" value="C:ribosome"/>
    <property type="evidence" value="ECO:0007669"/>
    <property type="project" value="UniProtKB-KW"/>
</dbReference>
<dbReference type="GO" id="GO:0019843">
    <property type="term" value="F:rRNA binding"/>
    <property type="evidence" value="ECO:0007669"/>
    <property type="project" value="UniProtKB-UniRule"/>
</dbReference>
<dbReference type="GO" id="GO:0003735">
    <property type="term" value="F:structural constituent of ribosome"/>
    <property type="evidence" value="ECO:0007669"/>
    <property type="project" value="InterPro"/>
</dbReference>
<dbReference type="GO" id="GO:0000027">
    <property type="term" value="P:ribosomal large subunit assembly"/>
    <property type="evidence" value="ECO:0007669"/>
    <property type="project" value="UniProtKB-UniRule"/>
</dbReference>
<dbReference type="GO" id="GO:0006412">
    <property type="term" value="P:translation"/>
    <property type="evidence" value="ECO:0007669"/>
    <property type="project" value="InterPro"/>
</dbReference>
<dbReference type="CDD" id="cd07026">
    <property type="entry name" value="Ribosomal_L20"/>
    <property type="match status" value="1"/>
</dbReference>
<dbReference type="FunFam" id="1.10.1900.20:FF:000001">
    <property type="entry name" value="50S ribosomal protein L20"/>
    <property type="match status" value="1"/>
</dbReference>
<dbReference type="Gene3D" id="6.10.160.10">
    <property type="match status" value="1"/>
</dbReference>
<dbReference type="Gene3D" id="1.10.1900.20">
    <property type="entry name" value="Ribosomal protein L20"/>
    <property type="match status" value="1"/>
</dbReference>
<dbReference type="HAMAP" id="MF_00382">
    <property type="entry name" value="Ribosomal_bL20"/>
    <property type="match status" value="1"/>
</dbReference>
<dbReference type="InterPro" id="IPR005813">
    <property type="entry name" value="Ribosomal_bL20"/>
</dbReference>
<dbReference type="InterPro" id="IPR049946">
    <property type="entry name" value="RIBOSOMAL_L20_CS"/>
</dbReference>
<dbReference type="InterPro" id="IPR035566">
    <property type="entry name" value="Ribosomal_protein_bL20_C"/>
</dbReference>
<dbReference type="NCBIfam" id="TIGR01032">
    <property type="entry name" value="rplT_bact"/>
    <property type="match status" value="1"/>
</dbReference>
<dbReference type="PANTHER" id="PTHR10986">
    <property type="entry name" value="39S RIBOSOMAL PROTEIN L20"/>
    <property type="match status" value="1"/>
</dbReference>
<dbReference type="Pfam" id="PF00453">
    <property type="entry name" value="Ribosomal_L20"/>
    <property type="match status" value="1"/>
</dbReference>
<dbReference type="PRINTS" id="PR00062">
    <property type="entry name" value="RIBOSOMALL20"/>
</dbReference>
<dbReference type="SUPFAM" id="SSF74731">
    <property type="entry name" value="Ribosomal protein L20"/>
    <property type="match status" value="1"/>
</dbReference>
<dbReference type="PROSITE" id="PS00937">
    <property type="entry name" value="RIBOSOMAL_L20"/>
    <property type="match status" value="1"/>
</dbReference>
<gene>
    <name evidence="1" type="primary">rplT</name>
    <name type="ordered locus">SSU98_1282</name>
</gene>
<reference key="1">
    <citation type="journal article" date="2007" name="PLoS ONE">
        <title>A glimpse of streptococcal toxic shock syndrome from comparative genomics of S. suis 2 Chinese isolates.</title>
        <authorList>
            <person name="Chen C."/>
            <person name="Tang J."/>
            <person name="Dong W."/>
            <person name="Wang C."/>
            <person name="Feng Y."/>
            <person name="Wang J."/>
            <person name="Zheng F."/>
            <person name="Pan X."/>
            <person name="Liu D."/>
            <person name="Li M."/>
            <person name="Song Y."/>
            <person name="Zhu X."/>
            <person name="Sun H."/>
            <person name="Feng T."/>
            <person name="Guo Z."/>
            <person name="Ju A."/>
            <person name="Ge J."/>
            <person name="Dong Y."/>
            <person name="Sun W."/>
            <person name="Jiang Y."/>
            <person name="Wang J."/>
            <person name="Yan J."/>
            <person name="Yang H."/>
            <person name="Wang X."/>
            <person name="Gao G.F."/>
            <person name="Yang R."/>
            <person name="Wang J."/>
            <person name="Yu J."/>
        </authorList>
    </citation>
    <scope>NUCLEOTIDE SEQUENCE [LARGE SCALE GENOMIC DNA]</scope>
    <source>
        <strain>98HAH33</strain>
    </source>
</reference>
<keyword id="KW-0687">Ribonucleoprotein</keyword>
<keyword id="KW-0689">Ribosomal protein</keyword>
<keyword id="KW-0694">RNA-binding</keyword>
<keyword id="KW-0699">rRNA-binding</keyword>
<name>RL20_STRS2</name>
<feature type="chain" id="PRO_1000049088" description="Large ribosomal subunit protein bL20">
    <location>
        <begin position="1"/>
        <end position="119"/>
    </location>
</feature>
<proteinExistence type="inferred from homology"/>